<name>RPPH_SACD2</name>
<protein>
    <recommendedName>
        <fullName evidence="1">RNA pyrophosphohydrolase</fullName>
        <ecNumber evidence="1">3.6.1.-</ecNumber>
    </recommendedName>
    <alternativeName>
        <fullName evidence="1">(Di)nucleoside polyphosphate hydrolase</fullName>
    </alternativeName>
</protein>
<comment type="function">
    <text evidence="1">Accelerates the degradation of transcripts by removing pyrophosphate from the 5'-end of triphosphorylated RNA, leading to a more labile monophosphorylated state that can stimulate subsequent ribonuclease cleavage.</text>
</comment>
<comment type="cofactor">
    <cofactor evidence="1">
        <name>a divalent metal cation</name>
        <dbReference type="ChEBI" id="CHEBI:60240"/>
    </cofactor>
</comment>
<comment type="similarity">
    <text evidence="1">Belongs to the Nudix hydrolase family. RppH subfamily.</text>
</comment>
<accession>Q21NW8</accession>
<feature type="chain" id="PRO_1000021992" description="RNA pyrophosphohydrolase">
    <location>
        <begin position="1"/>
        <end position="170"/>
    </location>
</feature>
<feature type="domain" description="Nudix hydrolase" evidence="1">
    <location>
        <begin position="6"/>
        <end position="149"/>
    </location>
</feature>
<feature type="short sequence motif" description="Nudix box">
    <location>
        <begin position="39"/>
        <end position="60"/>
    </location>
</feature>
<gene>
    <name evidence="1" type="primary">rppH</name>
    <name evidence="1" type="synonym">nudH</name>
    <name type="ordered locus">Sde_0347</name>
</gene>
<reference key="1">
    <citation type="journal article" date="2008" name="PLoS Genet.">
        <title>Complete genome sequence of the complex carbohydrate-degrading marine bacterium, Saccharophagus degradans strain 2-40 T.</title>
        <authorList>
            <person name="Weiner R.M."/>
            <person name="Taylor L.E. II"/>
            <person name="Henrissat B."/>
            <person name="Hauser L."/>
            <person name="Land M."/>
            <person name="Coutinho P.M."/>
            <person name="Rancurel C."/>
            <person name="Saunders E.H."/>
            <person name="Longmire A.G."/>
            <person name="Zhang H."/>
            <person name="Bayer E.A."/>
            <person name="Gilbert H.J."/>
            <person name="Larimer F."/>
            <person name="Zhulin I.B."/>
            <person name="Ekborg N.A."/>
            <person name="Lamed R."/>
            <person name="Richardson P.M."/>
            <person name="Borovok I."/>
            <person name="Hutcheson S."/>
        </authorList>
    </citation>
    <scope>NUCLEOTIDE SEQUENCE [LARGE SCALE GENOMIC DNA]</scope>
    <source>
        <strain>2-40 / ATCC 43961 / DSM 17024</strain>
    </source>
</reference>
<sequence length="170" mass="19664">MIDADGFRPNVGIILTDDQGRLLWARRVGGQDAWQFPQGGIKHNESPENALYRELEEEVGLCKADVEVLGVTQGWLRYRLPRRLVRDKEPKCVGQKQKWYLLRLVSNDSAIRLDASSPAEFDTWNWVSYWYPLGKVVAFKRDVYRRALKELSPVYNQYFLSTLGEGRALC</sequence>
<evidence type="ECO:0000255" key="1">
    <source>
        <dbReference type="HAMAP-Rule" id="MF_00298"/>
    </source>
</evidence>
<keyword id="KW-0378">Hydrolase</keyword>
<keyword id="KW-1185">Reference proteome</keyword>
<dbReference type="EC" id="3.6.1.-" evidence="1"/>
<dbReference type="EMBL" id="CP000282">
    <property type="protein sequence ID" value="ABD79611.1"/>
    <property type="molecule type" value="Genomic_DNA"/>
</dbReference>
<dbReference type="RefSeq" id="WP_011466835.1">
    <property type="nucleotide sequence ID" value="NC_007912.1"/>
</dbReference>
<dbReference type="SMR" id="Q21NW8"/>
<dbReference type="STRING" id="203122.Sde_0347"/>
<dbReference type="GeneID" id="98612048"/>
<dbReference type="KEGG" id="sde:Sde_0347"/>
<dbReference type="eggNOG" id="COG0494">
    <property type="taxonomic scope" value="Bacteria"/>
</dbReference>
<dbReference type="HOGENOM" id="CLU_087195_3_1_6"/>
<dbReference type="OrthoDB" id="9816040at2"/>
<dbReference type="Proteomes" id="UP000001947">
    <property type="component" value="Chromosome"/>
</dbReference>
<dbReference type="GO" id="GO:0016462">
    <property type="term" value="F:pyrophosphatase activity"/>
    <property type="evidence" value="ECO:0007669"/>
    <property type="project" value="UniProtKB-ARBA"/>
</dbReference>
<dbReference type="CDD" id="cd03671">
    <property type="entry name" value="NUDIX_Ap4A_hydrolase_plant_like"/>
    <property type="match status" value="1"/>
</dbReference>
<dbReference type="FunFam" id="3.90.79.10:FF:000001">
    <property type="entry name" value="RNA pyrophosphohydrolase"/>
    <property type="match status" value="1"/>
</dbReference>
<dbReference type="Gene3D" id="3.90.79.10">
    <property type="entry name" value="Nucleoside Triphosphate Pyrophosphohydrolase"/>
    <property type="match status" value="1"/>
</dbReference>
<dbReference type="HAMAP" id="MF_00298">
    <property type="entry name" value="Nudix_RppH"/>
    <property type="match status" value="1"/>
</dbReference>
<dbReference type="InterPro" id="IPR020476">
    <property type="entry name" value="Nudix_hydrolase"/>
</dbReference>
<dbReference type="InterPro" id="IPR015797">
    <property type="entry name" value="NUDIX_hydrolase-like_dom_sf"/>
</dbReference>
<dbReference type="InterPro" id="IPR020084">
    <property type="entry name" value="NUDIX_hydrolase_CS"/>
</dbReference>
<dbReference type="InterPro" id="IPR000086">
    <property type="entry name" value="NUDIX_hydrolase_dom"/>
</dbReference>
<dbReference type="InterPro" id="IPR022927">
    <property type="entry name" value="RppH"/>
</dbReference>
<dbReference type="NCBIfam" id="NF001937">
    <property type="entry name" value="PRK00714.1-4"/>
    <property type="match status" value="1"/>
</dbReference>
<dbReference type="NCBIfam" id="NF001938">
    <property type="entry name" value="PRK00714.1-5"/>
    <property type="match status" value="1"/>
</dbReference>
<dbReference type="PANTHER" id="PTHR43046">
    <property type="entry name" value="GDP-MANNOSE MANNOSYL HYDROLASE"/>
    <property type="match status" value="1"/>
</dbReference>
<dbReference type="PANTHER" id="PTHR43046:SF14">
    <property type="entry name" value="MUTT_NUDIX FAMILY PROTEIN"/>
    <property type="match status" value="1"/>
</dbReference>
<dbReference type="Pfam" id="PF00293">
    <property type="entry name" value="NUDIX"/>
    <property type="match status" value="1"/>
</dbReference>
<dbReference type="PRINTS" id="PR00502">
    <property type="entry name" value="NUDIXFAMILY"/>
</dbReference>
<dbReference type="SUPFAM" id="SSF55811">
    <property type="entry name" value="Nudix"/>
    <property type="match status" value="1"/>
</dbReference>
<dbReference type="PROSITE" id="PS51462">
    <property type="entry name" value="NUDIX"/>
    <property type="match status" value="1"/>
</dbReference>
<dbReference type="PROSITE" id="PS00893">
    <property type="entry name" value="NUDIX_BOX"/>
    <property type="match status" value="1"/>
</dbReference>
<proteinExistence type="inferred from homology"/>
<organism>
    <name type="scientific">Saccharophagus degradans (strain 2-40 / ATCC 43961 / DSM 17024)</name>
    <dbReference type="NCBI Taxonomy" id="203122"/>
    <lineage>
        <taxon>Bacteria</taxon>
        <taxon>Pseudomonadati</taxon>
        <taxon>Pseudomonadota</taxon>
        <taxon>Gammaproteobacteria</taxon>
        <taxon>Cellvibrionales</taxon>
        <taxon>Cellvibrionaceae</taxon>
        <taxon>Saccharophagus</taxon>
    </lineage>
</organism>